<name>Y2948_MYCBO</name>
<gene>
    <name type="ordered locus">BQ2027_MB2948C</name>
</gene>
<dbReference type="EMBL" id="LT708304">
    <property type="protein sequence ID" value="SIU01569.1"/>
    <property type="molecule type" value="Genomic_DNA"/>
</dbReference>
<dbReference type="RefSeq" id="NP_856593.1">
    <property type="nucleotide sequence ID" value="NC_002945.3"/>
</dbReference>
<dbReference type="RefSeq" id="WP_003414812.1">
    <property type="nucleotide sequence ID" value="NC_002945.4"/>
</dbReference>
<dbReference type="SMR" id="P65056"/>
<dbReference type="KEGG" id="mbo:BQ2027_MB2948C"/>
<dbReference type="PATRIC" id="fig|233413.5.peg.3235"/>
<dbReference type="Proteomes" id="UP000001419">
    <property type="component" value="Chromosome"/>
</dbReference>
<dbReference type="Gene3D" id="3.30.300.20">
    <property type="match status" value="1"/>
</dbReference>
<dbReference type="InterPro" id="IPR015946">
    <property type="entry name" value="KH_dom-like_a/b"/>
</dbReference>
<dbReference type="InterPro" id="IPR003718">
    <property type="entry name" value="OsmC/Ohr_fam"/>
</dbReference>
<dbReference type="InterPro" id="IPR036102">
    <property type="entry name" value="OsmC/Ohrsf"/>
</dbReference>
<dbReference type="Pfam" id="PF02566">
    <property type="entry name" value="OsmC"/>
    <property type="match status" value="1"/>
</dbReference>
<dbReference type="SUPFAM" id="SSF82784">
    <property type="entry name" value="OsmC-like"/>
    <property type="match status" value="1"/>
</dbReference>
<sequence>MTQLWVERTGTRRYIGRSTRGAQVLVGSEDVDGVFTPGELLKIALAACSGMASDQPLARRLGDDYQAVVKVSGAADRDQERYPLIEETMELDLSGLTEDEKERLLVVINRAVELACTVGRTLKSGTTVNLEVVDVGA</sequence>
<organism>
    <name type="scientific">Mycobacterium bovis (strain ATCC BAA-935 / AF2122/97)</name>
    <dbReference type="NCBI Taxonomy" id="233413"/>
    <lineage>
        <taxon>Bacteria</taxon>
        <taxon>Bacillati</taxon>
        <taxon>Actinomycetota</taxon>
        <taxon>Actinomycetes</taxon>
        <taxon>Mycobacteriales</taxon>
        <taxon>Mycobacteriaceae</taxon>
        <taxon>Mycobacterium</taxon>
        <taxon>Mycobacterium tuberculosis complex</taxon>
    </lineage>
</organism>
<accession>P65056</accession>
<accession>A0A1R3Y2K9</accession>
<accession>Q10971</accession>
<accession>X2BMH5</accession>
<keyword id="KW-1185">Reference proteome</keyword>
<protein>
    <recommendedName>
        <fullName>Uncharacterized protein Mb2948c</fullName>
    </recommendedName>
</protein>
<feature type="chain" id="PRO_0000104105" description="Uncharacterized protein Mb2948c">
    <location>
        <begin position="1"/>
        <end position="137"/>
    </location>
</feature>
<proteinExistence type="predicted"/>
<reference key="1">
    <citation type="journal article" date="2003" name="Proc. Natl. Acad. Sci. U.S.A.">
        <title>The complete genome sequence of Mycobacterium bovis.</title>
        <authorList>
            <person name="Garnier T."/>
            <person name="Eiglmeier K."/>
            <person name="Camus J.-C."/>
            <person name="Medina N."/>
            <person name="Mansoor H."/>
            <person name="Pryor M."/>
            <person name="Duthoy S."/>
            <person name="Grondin S."/>
            <person name="Lacroix C."/>
            <person name="Monsempe C."/>
            <person name="Simon S."/>
            <person name="Harris B."/>
            <person name="Atkin R."/>
            <person name="Doggett J."/>
            <person name="Mayes R."/>
            <person name="Keating L."/>
            <person name="Wheeler P.R."/>
            <person name="Parkhill J."/>
            <person name="Barrell B.G."/>
            <person name="Cole S.T."/>
            <person name="Gordon S.V."/>
            <person name="Hewinson R.G."/>
        </authorList>
    </citation>
    <scope>NUCLEOTIDE SEQUENCE [LARGE SCALE GENOMIC DNA]</scope>
    <source>
        <strain>ATCC BAA-935 / AF2122/97</strain>
    </source>
</reference>
<reference key="2">
    <citation type="journal article" date="2017" name="Genome Announc.">
        <title>Updated reference genome sequence and annotation of Mycobacterium bovis AF2122/97.</title>
        <authorList>
            <person name="Malone K.M."/>
            <person name="Farrell D."/>
            <person name="Stuber T.P."/>
            <person name="Schubert O.T."/>
            <person name="Aebersold R."/>
            <person name="Robbe-Austerman S."/>
            <person name="Gordon S.V."/>
        </authorList>
    </citation>
    <scope>NUCLEOTIDE SEQUENCE [LARGE SCALE GENOMIC DNA]</scope>
    <scope>GENOME REANNOTATION</scope>
    <source>
        <strain>ATCC BAA-935 / AF2122/97</strain>
    </source>
</reference>